<dbReference type="EC" id="1.14.14.17" evidence="2"/>
<dbReference type="EMBL" id="AJ005931">
    <property type="protein sequence ID" value="CAA06773.1"/>
    <property type="molecule type" value="mRNA"/>
</dbReference>
<dbReference type="PIR" id="T07942">
    <property type="entry name" value="T07942"/>
</dbReference>
<dbReference type="RefSeq" id="NP_001302760.1">
    <property type="nucleotide sequence ID" value="NM_001315831.1"/>
</dbReference>
<dbReference type="SMR" id="O65727"/>
<dbReference type="KEGG" id="bna:106366016"/>
<dbReference type="OrthoDB" id="1085504at2759"/>
<dbReference type="UniPathway" id="UPA00767">
    <property type="reaction ID" value="UER00752"/>
</dbReference>
<dbReference type="GO" id="GO:0016020">
    <property type="term" value="C:membrane"/>
    <property type="evidence" value="ECO:0007669"/>
    <property type="project" value="UniProtKB-SubCell"/>
</dbReference>
<dbReference type="GO" id="GO:0050660">
    <property type="term" value="F:flavin adenine dinucleotide binding"/>
    <property type="evidence" value="ECO:0007669"/>
    <property type="project" value="InterPro"/>
</dbReference>
<dbReference type="GO" id="GO:0004506">
    <property type="term" value="F:squalene monooxygenase activity"/>
    <property type="evidence" value="ECO:0007669"/>
    <property type="project" value="UniProtKB-EC"/>
</dbReference>
<dbReference type="GO" id="GO:0016126">
    <property type="term" value="P:sterol biosynthetic process"/>
    <property type="evidence" value="ECO:0007669"/>
    <property type="project" value="InterPro"/>
</dbReference>
<dbReference type="FunFam" id="3.50.50.60:FF:000074">
    <property type="entry name" value="Squalene monooxygenase 2"/>
    <property type="match status" value="1"/>
</dbReference>
<dbReference type="Gene3D" id="3.50.50.60">
    <property type="entry name" value="FAD/NAD(P)-binding domain"/>
    <property type="match status" value="1"/>
</dbReference>
<dbReference type="InterPro" id="IPR006076">
    <property type="entry name" value="FAD-dep_OxRdtase"/>
</dbReference>
<dbReference type="InterPro" id="IPR036188">
    <property type="entry name" value="FAD/NAD-bd_sf"/>
</dbReference>
<dbReference type="InterPro" id="IPR013698">
    <property type="entry name" value="Squalene_epoxidase"/>
</dbReference>
<dbReference type="InterPro" id="IPR040125">
    <property type="entry name" value="Squalene_monox"/>
</dbReference>
<dbReference type="PANTHER" id="PTHR10835">
    <property type="entry name" value="SQUALENE MONOOXYGENASE"/>
    <property type="match status" value="1"/>
</dbReference>
<dbReference type="PANTHER" id="PTHR10835:SF6">
    <property type="entry name" value="SQUALENE MONOOXYGENASE"/>
    <property type="match status" value="1"/>
</dbReference>
<dbReference type="Pfam" id="PF01266">
    <property type="entry name" value="DAO"/>
    <property type="match status" value="1"/>
</dbReference>
<dbReference type="Pfam" id="PF08491">
    <property type="entry name" value="SE"/>
    <property type="match status" value="1"/>
</dbReference>
<dbReference type="PRINTS" id="PR00420">
    <property type="entry name" value="RNGMNOXGNASE"/>
</dbReference>
<dbReference type="SUPFAM" id="SSF51905">
    <property type="entry name" value="FAD/NAD(P)-binding domain"/>
    <property type="match status" value="1"/>
</dbReference>
<proteinExistence type="evidence at transcript level"/>
<comment type="function">
    <text evidence="2">Catalyzes the stereospecific oxidation of squalene to (S)-2,3-epoxysqualene, and is considered to be a rate-limiting enzyme in steroid biosynthesis.</text>
</comment>
<comment type="catalytic activity">
    <reaction evidence="2">
        <text>squalene + reduced [NADPH--hemoprotein reductase] + O2 = (S)-2,3-epoxysqualene + oxidized [NADPH--hemoprotein reductase] + H2O + H(+)</text>
        <dbReference type="Rhea" id="RHEA:25282"/>
        <dbReference type="Rhea" id="RHEA-COMP:11964"/>
        <dbReference type="Rhea" id="RHEA-COMP:11965"/>
        <dbReference type="ChEBI" id="CHEBI:15377"/>
        <dbReference type="ChEBI" id="CHEBI:15378"/>
        <dbReference type="ChEBI" id="CHEBI:15379"/>
        <dbReference type="ChEBI" id="CHEBI:15440"/>
        <dbReference type="ChEBI" id="CHEBI:15441"/>
        <dbReference type="ChEBI" id="CHEBI:57618"/>
        <dbReference type="ChEBI" id="CHEBI:58210"/>
        <dbReference type="EC" id="1.14.14.17"/>
    </reaction>
</comment>
<comment type="cofactor">
    <cofactor evidence="1">
        <name>FAD</name>
        <dbReference type="ChEBI" id="CHEBI:57692"/>
    </cofactor>
</comment>
<comment type="pathway">
    <text>Terpene metabolism; lanosterol biosynthesis; lanosterol from farnesyl diphosphate: step 2/3.</text>
</comment>
<comment type="subcellular location">
    <subcellularLocation>
        <location evidence="4">Membrane</location>
        <topology evidence="4">Multi-pass membrane protein</topology>
    </subcellularLocation>
</comment>
<comment type="similarity">
    <text evidence="4">Belongs to the squalene monooxygenase family.</text>
</comment>
<evidence type="ECO:0000250" key="1">
    <source>
        <dbReference type="UniProtKB" id="Q14534"/>
    </source>
</evidence>
<evidence type="ECO:0000250" key="2">
    <source>
        <dbReference type="UniProtKB" id="Q9SM02"/>
    </source>
</evidence>
<evidence type="ECO:0000255" key="3"/>
<evidence type="ECO:0000305" key="4"/>
<sequence length="506" mass="55572">MDLAFPHVCLWTLLAFVLTWTVFYVNNRRKKVAKLPDAATEVRRDGDADVIIVGAGVGGSALAYALAKDGRRVHVIERDMREPVRMMGEFMQPGGRLLLSKLGLEDCLEGIDEQIATGLAVYKDGQKALVSFPEDNDFPYEPTGRAFYNGRFVQRLRQKASSLPTVQLEEGTVKSLIEEKGVIKGVTYKNSAGEETTAFAPLTVVCDGCYSNLRRSVNDNNAEVISYQVGYVSKNCQLEDPEKLKLIMSKPSFTMLYQISSTDVRCVMEIFPGNIPSISNGEMAVYLKNTMAPQVPPELRKIFLKGIDEGAQIKAMPTKRMEATLSEKQGVIVLGDAFNMRHPAIASGMMVVLSDILILRRLLQPLRNLSDANKVSEVIKSFYVIRKPMSATVNTLGNAFSQVLIASTDEAKEAMRQGCFDYLSSGGFRTSGMMALLGGMNPRPLSLIFHLCGITLSSIGQLLSPFPSPLGIWHSLRLFGAEGVSQMLSPAYAAAYRKSYMTATAL</sequence>
<accession>O65727</accession>
<organism>
    <name type="scientific">Brassica napus</name>
    <name type="common">Rape</name>
    <dbReference type="NCBI Taxonomy" id="3708"/>
    <lineage>
        <taxon>Eukaryota</taxon>
        <taxon>Viridiplantae</taxon>
        <taxon>Streptophyta</taxon>
        <taxon>Embryophyta</taxon>
        <taxon>Tracheophyta</taxon>
        <taxon>Spermatophyta</taxon>
        <taxon>Magnoliopsida</taxon>
        <taxon>eudicotyledons</taxon>
        <taxon>Gunneridae</taxon>
        <taxon>Pentapetalae</taxon>
        <taxon>rosids</taxon>
        <taxon>malvids</taxon>
        <taxon>Brassicales</taxon>
        <taxon>Brassicaceae</taxon>
        <taxon>Brassiceae</taxon>
        <taxon>Brassica</taxon>
    </lineage>
</organism>
<protein>
    <recommendedName>
        <fullName>Squalene monooxygenase 1,1</fullName>
        <ecNumber evidence="2">1.14.14.17</ecNumber>
    </recommendedName>
    <alternativeName>
        <fullName>Squalene epoxidase 1,1</fullName>
        <shortName>SE 1,1</shortName>
    </alternativeName>
</protein>
<gene>
    <name type="primary">SQP1,1</name>
</gene>
<reference key="1">
    <citation type="journal article" date="1999" name="Plant Mol. Biol.">
        <title>An example of intron junctional sliding in the gene families encoding squalene monooxygenase homologues in Arabidopsis thaliana and Brassica napus.</title>
        <authorList>
            <person name="Schafer U.A."/>
            <person name="Reed D.W."/>
            <person name="Hunter D.G."/>
            <person name="Yao K."/>
            <person name="Weninger A.M."/>
            <person name="Tsang E.W.T."/>
            <person name="Reaney M.J.T."/>
            <person name="MacKenzie S.L."/>
            <person name="Covello P.S."/>
        </authorList>
    </citation>
    <scope>NUCLEOTIDE SEQUENCE [MRNA]</scope>
    <source>
        <strain>cv. Westar</strain>
        <tissue>Shoot</tissue>
    </source>
</reference>
<feature type="chain" id="PRO_0000209844" description="Squalene monooxygenase 1,1">
    <location>
        <begin position="1"/>
        <end position="506"/>
    </location>
</feature>
<feature type="transmembrane region" description="Helical" evidence="3">
    <location>
        <begin position="3"/>
        <end position="23"/>
    </location>
</feature>
<feature type="transmembrane region" description="Helical" evidence="3">
    <location>
        <begin position="47"/>
        <end position="67"/>
    </location>
</feature>
<feature type="transmembrane region" description="Helical" evidence="3">
    <location>
        <begin position="447"/>
        <end position="467"/>
    </location>
</feature>
<feature type="binding site" evidence="1">
    <location>
        <begin position="57"/>
        <end position="58"/>
    </location>
    <ligand>
        <name>FAD</name>
        <dbReference type="ChEBI" id="CHEBI:57692"/>
    </ligand>
</feature>
<feature type="binding site" evidence="1">
    <location>
        <begin position="77"/>
        <end position="78"/>
    </location>
    <ligand>
        <name>FAD</name>
        <dbReference type="ChEBI" id="CHEBI:57692"/>
    </ligand>
</feature>
<feature type="binding site" evidence="1">
    <location>
        <position position="85"/>
    </location>
    <ligand>
        <name>FAD</name>
        <dbReference type="ChEBI" id="CHEBI:57692"/>
    </ligand>
</feature>
<feature type="binding site" evidence="1">
    <location>
        <position position="90"/>
    </location>
    <ligand>
        <name>FAD</name>
        <dbReference type="ChEBI" id="CHEBI:57692"/>
    </ligand>
</feature>
<feature type="binding site" evidence="1">
    <location>
        <position position="157"/>
    </location>
    <ligand>
        <name>FAD</name>
        <dbReference type="ChEBI" id="CHEBI:57692"/>
    </ligand>
</feature>
<feature type="binding site" evidence="1">
    <location>
        <position position="173"/>
    </location>
    <ligand>
        <name>FAD</name>
        <dbReference type="ChEBI" id="CHEBI:57692"/>
    </ligand>
</feature>
<feature type="binding site" evidence="1">
    <location>
        <position position="336"/>
    </location>
    <ligand>
        <name>FAD</name>
        <dbReference type="ChEBI" id="CHEBI:57692"/>
    </ligand>
</feature>
<feature type="binding site" evidence="1">
    <location>
        <position position="349"/>
    </location>
    <ligand>
        <name>FAD</name>
        <dbReference type="ChEBI" id="CHEBI:57692"/>
    </ligand>
</feature>
<name>ERG11_BRANA</name>
<keyword id="KW-0274">FAD</keyword>
<keyword id="KW-0285">Flavoprotein</keyword>
<keyword id="KW-0472">Membrane</keyword>
<keyword id="KW-0560">Oxidoreductase</keyword>
<keyword id="KW-0812">Transmembrane</keyword>
<keyword id="KW-1133">Transmembrane helix</keyword>